<comment type="function">
    <text evidence="7">Secreted effector that interacts with and inhibits host apoplastic pathogenesis-related papain-like cysteine proteases (Probable). Inhibition of host proteases by a pathogen extracellular protease inhibitor forms a specific type of defense-counterdefense mechanism between plants and microbial pathogens (Probable).</text>
</comment>
<comment type="subcellular location">
    <subcellularLocation>
        <location evidence="7">Secreted</location>
    </subcellularLocation>
    <text evidence="7">Localizes to host apoplast where it targets defense proteases for inhibition.</text>
</comment>
<comment type="induction">
    <text evidence="4">Expression is up-regulated during infection of host tomato.</text>
</comment>
<comment type="similarity">
    <text evidence="6">Belongs to the cystatin family.</text>
</comment>
<evidence type="ECO:0000250" key="1">
    <source>
        <dbReference type="UniProtKB" id="P01040"/>
    </source>
</evidence>
<evidence type="ECO:0000255" key="2"/>
<evidence type="ECO:0000255" key="3">
    <source>
        <dbReference type="PROSITE-ProRule" id="PRU00498"/>
    </source>
</evidence>
<evidence type="ECO:0000269" key="4">
    <source>
    </source>
</evidence>
<evidence type="ECO:0000303" key="5">
    <source>
    </source>
</evidence>
<evidence type="ECO:0000305" key="6"/>
<evidence type="ECO:0000305" key="7">
    <source>
    </source>
</evidence>
<proteinExistence type="evidence at transcript level"/>
<gene>
    <name evidence="5" type="primary">EPIC2A</name>
    <name type="ORF">PITG_09175</name>
</gene>
<name>EPI2A_PHYIT</name>
<sequence>MSFLRPTLALLAVTALVTTSAQMNGYTKKEVTPEDMELLQKAQSNVSAYNRDVTSRICYLKVDSLETQVVSGESYKFHVSGCGVNSDKELGGCANQNCESSKYDIVIYSQSWTNTLEVTSITPAN</sequence>
<dbReference type="EMBL" id="AY935251">
    <property type="protein sequence ID" value="AAY21182.1"/>
    <property type="molecule type" value="mRNA"/>
</dbReference>
<dbReference type="EMBL" id="DS028131">
    <property type="protein sequence ID" value="EEY55259.1"/>
    <property type="molecule type" value="Genomic_DNA"/>
</dbReference>
<dbReference type="RefSeq" id="XP_002903483.1">
    <property type="nucleotide sequence ID" value="XM_002903437.1"/>
</dbReference>
<dbReference type="SMR" id="D0NBV4"/>
<dbReference type="STRING" id="403677.D0NBV4"/>
<dbReference type="GlyCosmos" id="D0NBV4">
    <property type="glycosylation" value="1 site, No reported glycans"/>
</dbReference>
<dbReference type="EnsemblProtists" id="PITG_09175T0">
    <property type="protein sequence ID" value="PITG_09175T0"/>
    <property type="gene ID" value="PITG_09175"/>
</dbReference>
<dbReference type="GeneID" id="9470510"/>
<dbReference type="KEGG" id="pif:PITG_09175"/>
<dbReference type="VEuPathDB" id="FungiDB:PITG_09175"/>
<dbReference type="eggNOG" id="ENOG502RGHP">
    <property type="taxonomic scope" value="Eukaryota"/>
</dbReference>
<dbReference type="HOGENOM" id="CLU_117422_0_0_1"/>
<dbReference type="InParanoid" id="D0NBV4"/>
<dbReference type="OMA" id="VNARICY"/>
<dbReference type="OrthoDB" id="164262at2759"/>
<dbReference type="Proteomes" id="UP000006643">
    <property type="component" value="Partially assembled WGS sequence"/>
</dbReference>
<dbReference type="GO" id="GO:0005576">
    <property type="term" value="C:extracellular region"/>
    <property type="evidence" value="ECO:0007669"/>
    <property type="project" value="UniProtKB-SubCell"/>
</dbReference>
<dbReference type="GO" id="GO:0004869">
    <property type="term" value="F:cysteine-type endopeptidase inhibitor activity"/>
    <property type="evidence" value="ECO:0007669"/>
    <property type="project" value="UniProtKB-KW"/>
</dbReference>
<dbReference type="GO" id="GO:0030414">
    <property type="term" value="F:peptidase inhibitor activity"/>
    <property type="evidence" value="ECO:0000250"/>
    <property type="project" value="UniProtKB"/>
</dbReference>
<dbReference type="Gene3D" id="3.10.450.10">
    <property type="match status" value="1"/>
</dbReference>
<dbReference type="InterPro" id="IPR046350">
    <property type="entry name" value="Cystatin_sf"/>
</dbReference>
<dbReference type="SUPFAM" id="SSF54403">
    <property type="entry name" value="Cystatin/monellin"/>
    <property type="match status" value="1"/>
</dbReference>
<keyword id="KW-0325">Glycoprotein</keyword>
<keyword id="KW-0646">Protease inhibitor</keyword>
<keyword id="KW-1185">Reference proteome</keyword>
<keyword id="KW-0964">Secreted</keyword>
<keyword id="KW-0732">Signal</keyword>
<keyword id="KW-0789">Thiol protease inhibitor</keyword>
<keyword id="KW-0843">Virulence</keyword>
<protein>
    <recommendedName>
        <fullName evidence="5">Cystatin-like cysteine protease inhibitor EPIC2A</fullName>
    </recommendedName>
    <alternativeName>
        <fullName evidence="5">Extracellular protease inhibitor with cystatin-like domain protein 2A</fullName>
    </alternativeName>
    <alternativeName>
        <fullName evidence="5">Secreted effector EPIC2A</fullName>
    </alternativeName>
</protein>
<organism>
    <name type="scientific">Phytophthora infestans (strain T30-4)</name>
    <name type="common">Potato late blight agent</name>
    <dbReference type="NCBI Taxonomy" id="403677"/>
    <lineage>
        <taxon>Eukaryota</taxon>
        <taxon>Sar</taxon>
        <taxon>Stramenopiles</taxon>
        <taxon>Oomycota</taxon>
        <taxon>Peronosporales</taxon>
        <taxon>Peronosporaceae</taxon>
        <taxon>Phytophthora</taxon>
    </lineage>
</organism>
<accession>D0NBV4</accession>
<accession>A1L016</accession>
<feature type="signal peptide" evidence="2">
    <location>
        <begin position="1"/>
        <end position="21"/>
    </location>
</feature>
<feature type="chain" id="PRO_5003012301" description="Cystatin-like cysteine protease inhibitor EPIC2A">
    <location>
        <begin position="22"/>
        <end position="125"/>
    </location>
</feature>
<feature type="short sequence motif" description="Secondary area of contact" evidence="1">
    <location>
        <begin position="68"/>
        <end position="72"/>
    </location>
</feature>
<feature type="site" description="Reactive site" evidence="1">
    <location>
        <position position="25"/>
    </location>
</feature>
<feature type="glycosylation site" description="N-linked (GlcNAc...) asparagine" evidence="3">
    <location>
        <position position="45"/>
    </location>
</feature>
<reference key="1">
    <citation type="journal article" date="2007" name="Plant Physiol.">
        <title>A Phytophthora infestans cystatin-like protein targets a novel tomato papain-like apoplastic protease.</title>
        <authorList>
            <person name="Tian M."/>
            <person name="Win J."/>
            <person name="Song J."/>
            <person name="van der Hoorn R."/>
            <person name="van der Knaap E."/>
            <person name="Kamoun S."/>
        </authorList>
    </citation>
    <scope>NUCLEOTIDE SEQUENCE [MRNA]</scope>
    <scope>INDUCTION</scope>
    <scope>FUNCTION</scope>
    <scope>SUBCELLULAR LOCATION</scope>
    <source>
        <strain>T30-4</strain>
    </source>
</reference>
<reference key="2">
    <citation type="journal article" date="2009" name="Nature">
        <title>Genome sequence and analysis of the Irish potato famine pathogen Phytophthora infestans.</title>
        <authorList>
            <consortium name="The Broad Institute Genome Sequencing Platform"/>
            <person name="Haas B.J."/>
            <person name="Kamoun S."/>
            <person name="Zody M.C."/>
            <person name="Jiang R.H."/>
            <person name="Handsaker R.E."/>
            <person name="Cano L.M."/>
            <person name="Grabherr M."/>
            <person name="Kodira C.D."/>
            <person name="Raffaele S."/>
            <person name="Torto-Alalibo T."/>
            <person name="Bozkurt T.O."/>
            <person name="Ah-Fong A.M."/>
            <person name="Alvarado L."/>
            <person name="Anderson V.L."/>
            <person name="Armstrong M.R."/>
            <person name="Avrova A."/>
            <person name="Baxter L."/>
            <person name="Beynon J."/>
            <person name="Boevink P.C."/>
            <person name="Bollmann S.R."/>
            <person name="Bos J.I."/>
            <person name="Bulone V."/>
            <person name="Cai G."/>
            <person name="Cakir C."/>
            <person name="Carrington J.C."/>
            <person name="Chawner M."/>
            <person name="Conti L."/>
            <person name="Costanzo S."/>
            <person name="Ewan R."/>
            <person name="Fahlgren N."/>
            <person name="Fischbach M.A."/>
            <person name="Fugelstad J."/>
            <person name="Gilroy E.M."/>
            <person name="Gnerre S."/>
            <person name="Green P.J."/>
            <person name="Grenville-Briggs L.J."/>
            <person name="Griffith J."/>
            <person name="Grunwald N.J."/>
            <person name="Horn K."/>
            <person name="Horner N.R."/>
            <person name="Hu C.H."/>
            <person name="Huitema E."/>
            <person name="Jeong D.H."/>
            <person name="Jones A.M."/>
            <person name="Jones J.D."/>
            <person name="Jones R.W."/>
            <person name="Karlsson E.K."/>
            <person name="Kunjeti S.G."/>
            <person name="Lamour K."/>
            <person name="Liu Z."/>
            <person name="Ma L."/>
            <person name="Maclean D."/>
            <person name="Chibucos M.C."/>
            <person name="McDonald H."/>
            <person name="McWalters J."/>
            <person name="Meijer H.J."/>
            <person name="Morgan W."/>
            <person name="Morris P.F."/>
            <person name="Munro C.A."/>
            <person name="O'Neill K."/>
            <person name="Ospina-Giraldo M."/>
            <person name="Pinzon A."/>
            <person name="Pritchard L."/>
            <person name="Ramsahoye B."/>
            <person name="Ren Q."/>
            <person name="Restrepo S."/>
            <person name="Roy S."/>
            <person name="Sadanandom A."/>
            <person name="Savidor A."/>
            <person name="Schornack S."/>
            <person name="Schwartz D.C."/>
            <person name="Schumann U.D."/>
            <person name="Schwessinger B."/>
            <person name="Seyer L."/>
            <person name="Sharpe T."/>
            <person name="Silvar C."/>
            <person name="Song J."/>
            <person name="Studholme D.J."/>
            <person name="Sykes S."/>
            <person name="Thines M."/>
            <person name="van de Vondervoort P.J."/>
            <person name="Phuntumart V."/>
            <person name="Wawra S."/>
            <person name="Weide R."/>
            <person name="Win J."/>
            <person name="Young C."/>
            <person name="Zhou S."/>
            <person name="Fry W."/>
            <person name="Meyers B.C."/>
            <person name="van West P."/>
            <person name="Ristaino J."/>
            <person name="Govers F."/>
            <person name="Birch P.R."/>
            <person name="Whisson S.C."/>
            <person name="Judelson H.S."/>
            <person name="Nusbaum C."/>
        </authorList>
    </citation>
    <scope>NUCLEOTIDE SEQUENCE [LARGE SCALE GENOMIC DNA]</scope>
    <source>
        <strain>T30-4</strain>
    </source>
</reference>